<gene>
    <name evidence="1" type="primary">nuoI</name>
    <name type="ordered locus">A1I_07420</name>
</gene>
<proteinExistence type="inferred from homology"/>
<protein>
    <recommendedName>
        <fullName evidence="1">NADH-quinone oxidoreductase subunit I</fullName>
        <ecNumber evidence="1">7.1.1.-</ecNumber>
    </recommendedName>
    <alternativeName>
        <fullName evidence="1">NADH dehydrogenase I subunit I</fullName>
    </alternativeName>
    <alternativeName>
        <fullName evidence="1">NDH-1 subunit I</fullName>
    </alternativeName>
</protein>
<accession>A8GY32</accession>
<name>NUOI_RICB8</name>
<reference key="1">
    <citation type="submission" date="2007-09" db="EMBL/GenBank/DDBJ databases">
        <title>Complete genome sequencing of Rickettsia bellii.</title>
        <authorList>
            <person name="Madan A."/>
            <person name="Lee H."/>
            <person name="Madan A."/>
            <person name="Yoon J.-G."/>
            <person name="Ryu G.-Y."/>
            <person name="Dasch G."/>
            <person name="Ereemeva M."/>
        </authorList>
    </citation>
    <scope>NUCLEOTIDE SEQUENCE [LARGE SCALE GENOMIC DNA]</scope>
    <source>
        <strain>OSU 85-389</strain>
    </source>
</reference>
<dbReference type="EC" id="7.1.1.-" evidence="1"/>
<dbReference type="EMBL" id="CP000849">
    <property type="protein sequence ID" value="ABV79782.1"/>
    <property type="molecule type" value="Genomic_DNA"/>
</dbReference>
<dbReference type="RefSeq" id="WP_011476799.1">
    <property type="nucleotide sequence ID" value="NC_009883.1"/>
</dbReference>
<dbReference type="SMR" id="A8GY32"/>
<dbReference type="KEGG" id="rbo:A1I_07420"/>
<dbReference type="HOGENOM" id="CLU_067218_5_1_5"/>
<dbReference type="GO" id="GO:0005886">
    <property type="term" value="C:plasma membrane"/>
    <property type="evidence" value="ECO:0007669"/>
    <property type="project" value="UniProtKB-SubCell"/>
</dbReference>
<dbReference type="GO" id="GO:0051539">
    <property type="term" value="F:4 iron, 4 sulfur cluster binding"/>
    <property type="evidence" value="ECO:0007669"/>
    <property type="project" value="UniProtKB-KW"/>
</dbReference>
<dbReference type="GO" id="GO:0005506">
    <property type="term" value="F:iron ion binding"/>
    <property type="evidence" value="ECO:0007669"/>
    <property type="project" value="UniProtKB-UniRule"/>
</dbReference>
<dbReference type="GO" id="GO:0050136">
    <property type="term" value="F:NADH:ubiquinone reductase (non-electrogenic) activity"/>
    <property type="evidence" value="ECO:0007669"/>
    <property type="project" value="UniProtKB-UniRule"/>
</dbReference>
<dbReference type="GO" id="GO:0048038">
    <property type="term" value="F:quinone binding"/>
    <property type="evidence" value="ECO:0007669"/>
    <property type="project" value="UniProtKB-KW"/>
</dbReference>
<dbReference type="GO" id="GO:0009060">
    <property type="term" value="P:aerobic respiration"/>
    <property type="evidence" value="ECO:0007669"/>
    <property type="project" value="TreeGrafter"/>
</dbReference>
<dbReference type="FunFam" id="3.30.70.3270:FF:000001">
    <property type="entry name" value="NADH-quinone oxidoreductase subunit I 1"/>
    <property type="match status" value="1"/>
</dbReference>
<dbReference type="Gene3D" id="3.30.70.3270">
    <property type="match status" value="1"/>
</dbReference>
<dbReference type="HAMAP" id="MF_01351">
    <property type="entry name" value="NDH1_NuoI"/>
    <property type="match status" value="1"/>
</dbReference>
<dbReference type="InterPro" id="IPR017896">
    <property type="entry name" value="4Fe4S_Fe-S-bd"/>
</dbReference>
<dbReference type="InterPro" id="IPR017900">
    <property type="entry name" value="4Fe4S_Fe_S_CS"/>
</dbReference>
<dbReference type="InterPro" id="IPR010226">
    <property type="entry name" value="NADH_quinone_OxRdtase_chainI"/>
</dbReference>
<dbReference type="NCBIfam" id="TIGR01971">
    <property type="entry name" value="NuoI"/>
    <property type="match status" value="1"/>
</dbReference>
<dbReference type="NCBIfam" id="NF004538">
    <property type="entry name" value="PRK05888.1-4"/>
    <property type="match status" value="1"/>
</dbReference>
<dbReference type="NCBIfam" id="NF004539">
    <property type="entry name" value="PRK05888.1-5"/>
    <property type="match status" value="1"/>
</dbReference>
<dbReference type="PANTHER" id="PTHR10849:SF20">
    <property type="entry name" value="NADH DEHYDROGENASE [UBIQUINONE] IRON-SULFUR PROTEIN 8, MITOCHONDRIAL"/>
    <property type="match status" value="1"/>
</dbReference>
<dbReference type="PANTHER" id="PTHR10849">
    <property type="entry name" value="NADH DEHYDROGENASE UBIQUINONE IRON-SULFUR PROTEIN 8, MITOCHONDRIAL"/>
    <property type="match status" value="1"/>
</dbReference>
<dbReference type="Pfam" id="PF12838">
    <property type="entry name" value="Fer4_7"/>
    <property type="match status" value="1"/>
</dbReference>
<dbReference type="SUPFAM" id="SSF54862">
    <property type="entry name" value="4Fe-4S ferredoxins"/>
    <property type="match status" value="1"/>
</dbReference>
<dbReference type="PROSITE" id="PS00198">
    <property type="entry name" value="4FE4S_FER_1"/>
    <property type="match status" value="2"/>
</dbReference>
<dbReference type="PROSITE" id="PS51379">
    <property type="entry name" value="4FE4S_FER_2"/>
    <property type="match status" value="2"/>
</dbReference>
<keyword id="KW-0004">4Fe-4S</keyword>
<keyword id="KW-0997">Cell inner membrane</keyword>
<keyword id="KW-1003">Cell membrane</keyword>
<keyword id="KW-0408">Iron</keyword>
<keyword id="KW-0411">Iron-sulfur</keyword>
<keyword id="KW-0472">Membrane</keyword>
<keyword id="KW-0479">Metal-binding</keyword>
<keyword id="KW-0520">NAD</keyword>
<keyword id="KW-0874">Quinone</keyword>
<keyword id="KW-0677">Repeat</keyword>
<keyword id="KW-1278">Translocase</keyword>
<keyword id="KW-0830">Ubiquinone</keyword>
<organism>
    <name type="scientific">Rickettsia bellii (strain OSU 85-389)</name>
    <dbReference type="NCBI Taxonomy" id="391896"/>
    <lineage>
        <taxon>Bacteria</taxon>
        <taxon>Pseudomonadati</taxon>
        <taxon>Pseudomonadota</taxon>
        <taxon>Alphaproteobacteria</taxon>
        <taxon>Rickettsiales</taxon>
        <taxon>Rickettsiaceae</taxon>
        <taxon>Rickettsieae</taxon>
        <taxon>Rickettsia</taxon>
        <taxon>belli group</taxon>
    </lineage>
</organism>
<comment type="function">
    <text evidence="1">NDH-1 shuttles electrons from NADH, via FMN and iron-sulfur (Fe-S) centers, to quinones in the respiratory chain. The immediate electron acceptor for the enzyme in this species is believed to be ubiquinone. Couples the redox reaction to proton translocation (for every two electrons transferred, four hydrogen ions are translocated across the cytoplasmic membrane), and thus conserves the redox energy in a proton gradient.</text>
</comment>
<comment type="catalytic activity">
    <reaction evidence="1">
        <text>a quinone + NADH + 5 H(+)(in) = a quinol + NAD(+) + 4 H(+)(out)</text>
        <dbReference type="Rhea" id="RHEA:57888"/>
        <dbReference type="ChEBI" id="CHEBI:15378"/>
        <dbReference type="ChEBI" id="CHEBI:24646"/>
        <dbReference type="ChEBI" id="CHEBI:57540"/>
        <dbReference type="ChEBI" id="CHEBI:57945"/>
        <dbReference type="ChEBI" id="CHEBI:132124"/>
    </reaction>
</comment>
<comment type="cofactor">
    <cofactor evidence="1">
        <name>[4Fe-4S] cluster</name>
        <dbReference type="ChEBI" id="CHEBI:49883"/>
    </cofactor>
    <text evidence="1">Binds 2 [4Fe-4S] clusters per subunit.</text>
</comment>
<comment type="subunit">
    <text evidence="1">NDH-1 is composed of 14 different subunits. Subunits NuoA, H, J, K, L, M, N constitute the membrane sector of the complex.</text>
</comment>
<comment type="subcellular location">
    <subcellularLocation>
        <location evidence="1">Cell inner membrane</location>
        <topology evidence="1">Peripheral membrane protein</topology>
    </subcellularLocation>
</comment>
<comment type="similarity">
    <text evidence="1">Belongs to the complex I 23 kDa subunit family.</text>
</comment>
<sequence>MINYLKSFFLYEIIRGLALTLKYFFKAKVTINYPYEKSPVSPRFKGEHALRRYENGEERCIACKLCEAICPAQAIVIEADEREDGSRRTTRYDIDMTKCIYCGLCQEACPVDAIVEGPNFEFASLTHTALIYDKEKLLQNGDRWEQALANKLHKDYEYR</sequence>
<feature type="chain" id="PRO_1000143666" description="NADH-quinone oxidoreductase subunit I">
    <location>
        <begin position="1"/>
        <end position="159"/>
    </location>
</feature>
<feature type="domain" description="4Fe-4S ferredoxin-type 1" evidence="1">
    <location>
        <begin position="51"/>
        <end position="80"/>
    </location>
</feature>
<feature type="domain" description="4Fe-4S ferredoxin-type 2" evidence="1">
    <location>
        <begin position="90"/>
        <end position="119"/>
    </location>
</feature>
<feature type="binding site" evidence="1">
    <location>
        <position position="60"/>
    </location>
    <ligand>
        <name>[4Fe-4S] cluster</name>
        <dbReference type="ChEBI" id="CHEBI:49883"/>
        <label>1</label>
    </ligand>
</feature>
<feature type="binding site" evidence="1">
    <location>
        <position position="63"/>
    </location>
    <ligand>
        <name>[4Fe-4S] cluster</name>
        <dbReference type="ChEBI" id="CHEBI:49883"/>
        <label>1</label>
    </ligand>
</feature>
<feature type="binding site" evidence="1">
    <location>
        <position position="66"/>
    </location>
    <ligand>
        <name>[4Fe-4S] cluster</name>
        <dbReference type="ChEBI" id="CHEBI:49883"/>
        <label>1</label>
    </ligand>
</feature>
<feature type="binding site" evidence="1">
    <location>
        <position position="70"/>
    </location>
    <ligand>
        <name>[4Fe-4S] cluster</name>
        <dbReference type="ChEBI" id="CHEBI:49883"/>
        <label>2</label>
    </ligand>
</feature>
<feature type="binding site" evidence="1">
    <location>
        <position position="99"/>
    </location>
    <ligand>
        <name>[4Fe-4S] cluster</name>
        <dbReference type="ChEBI" id="CHEBI:49883"/>
        <label>2</label>
    </ligand>
</feature>
<feature type="binding site" evidence="1">
    <location>
        <position position="102"/>
    </location>
    <ligand>
        <name>[4Fe-4S] cluster</name>
        <dbReference type="ChEBI" id="CHEBI:49883"/>
        <label>2</label>
    </ligand>
</feature>
<feature type="binding site" evidence="1">
    <location>
        <position position="105"/>
    </location>
    <ligand>
        <name>[4Fe-4S] cluster</name>
        <dbReference type="ChEBI" id="CHEBI:49883"/>
        <label>2</label>
    </ligand>
</feature>
<feature type="binding site" evidence="1">
    <location>
        <position position="109"/>
    </location>
    <ligand>
        <name>[4Fe-4S] cluster</name>
        <dbReference type="ChEBI" id="CHEBI:49883"/>
        <label>1</label>
    </ligand>
</feature>
<evidence type="ECO:0000255" key="1">
    <source>
        <dbReference type="HAMAP-Rule" id="MF_01351"/>
    </source>
</evidence>